<reference key="1">
    <citation type="journal article" date="1989" name="Nucleic Acids Res.">
        <title>Nucleotide sequence of the tuf gene from Mycoplasma gallisepticum.</title>
        <authorList>
            <person name="Inamine J.M."/>
            <person name="Loechel S."/>
            <person name="Hu P.C."/>
        </authorList>
    </citation>
    <scope>NUCLEOTIDE SEQUENCE [GENOMIC DNA]</scope>
</reference>
<reference key="2">
    <citation type="journal article" date="2003" name="Microbiology">
        <title>The complete genome sequence of the avian pathogen Mycoplasma gallisepticum strain R(low).</title>
        <authorList>
            <person name="Papazisi L."/>
            <person name="Gorton T.S."/>
            <person name="Kutish G."/>
            <person name="Markham P.F."/>
            <person name="Browning G.F."/>
            <person name="Nguyen D.K."/>
            <person name="Swartzell S."/>
            <person name="Madan A."/>
            <person name="Mahairas G."/>
            <person name="Geary S.J."/>
        </authorList>
    </citation>
    <scope>NUCLEOTIDE SEQUENCE [LARGE SCALE GENOMIC DNA]</scope>
    <source>
        <strain>R(low / passage 15 / clone 2)</strain>
    </source>
</reference>
<dbReference type="EC" id="3.6.5.3" evidence="2"/>
<dbReference type="EMBL" id="X16462">
    <property type="protein sequence ID" value="CAA34482.1"/>
    <property type="molecule type" value="Genomic_DNA"/>
</dbReference>
<dbReference type="EMBL" id="AE015450">
    <property type="protein sequence ID" value="AAP56576.2"/>
    <property type="molecule type" value="Genomic_DNA"/>
</dbReference>
<dbReference type="PIR" id="S14910">
    <property type="entry name" value="EFYMTS"/>
</dbReference>
<dbReference type="RefSeq" id="WP_011113468.1">
    <property type="nucleotide sequence ID" value="NC_004829.2"/>
</dbReference>
<dbReference type="SMR" id="P18906"/>
<dbReference type="GeneID" id="93510061"/>
<dbReference type="KEGG" id="mga:MGA_1033"/>
<dbReference type="PATRIC" id="fig|233150.7.peg.252"/>
<dbReference type="HOGENOM" id="CLU_007265_0_1_14"/>
<dbReference type="OrthoDB" id="9804504at2"/>
<dbReference type="Proteomes" id="UP000001418">
    <property type="component" value="Chromosome"/>
</dbReference>
<dbReference type="GO" id="GO:0005829">
    <property type="term" value="C:cytosol"/>
    <property type="evidence" value="ECO:0007669"/>
    <property type="project" value="TreeGrafter"/>
</dbReference>
<dbReference type="GO" id="GO:0005525">
    <property type="term" value="F:GTP binding"/>
    <property type="evidence" value="ECO:0007669"/>
    <property type="project" value="UniProtKB-UniRule"/>
</dbReference>
<dbReference type="GO" id="GO:0003924">
    <property type="term" value="F:GTPase activity"/>
    <property type="evidence" value="ECO:0007669"/>
    <property type="project" value="InterPro"/>
</dbReference>
<dbReference type="GO" id="GO:0003746">
    <property type="term" value="F:translation elongation factor activity"/>
    <property type="evidence" value="ECO:0007669"/>
    <property type="project" value="UniProtKB-UniRule"/>
</dbReference>
<dbReference type="CDD" id="cd01884">
    <property type="entry name" value="EF_Tu"/>
    <property type="match status" value="1"/>
</dbReference>
<dbReference type="CDD" id="cd03697">
    <property type="entry name" value="EFTU_II"/>
    <property type="match status" value="1"/>
</dbReference>
<dbReference type="CDD" id="cd03707">
    <property type="entry name" value="EFTU_III"/>
    <property type="match status" value="1"/>
</dbReference>
<dbReference type="FunFam" id="2.40.30.10:FF:000001">
    <property type="entry name" value="Elongation factor Tu"/>
    <property type="match status" value="1"/>
</dbReference>
<dbReference type="FunFam" id="3.40.50.300:FF:000003">
    <property type="entry name" value="Elongation factor Tu"/>
    <property type="match status" value="1"/>
</dbReference>
<dbReference type="Gene3D" id="3.40.50.300">
    <property type="entry name" value="P-loop containing nucleotide triphosphate hydrolases"/>
    <property type="match status" value="1"/>
</dbReference>
<dbReference type="Gene3D" id="2.40.30.10">
    <property type="entry name" value="Translation factors"/>
    <property type="match status" value="2"/>
</dbReference>
<dbReference type="HAMAP" id="MF_00118_B">
    <property type="entry name" value="EF_Tu_B"/>
    <property type="match status" value="1"/>
</dbReference>
<dbReference type="InterPro" id="IPR041709">
    <property type="entry name" value="EF-Tu_GTP-bd"/>
</dbReference>
<dbReference type="InterPro" id="IPR050055">
    <property type="entry name" value="EF-Tu_GTPase"/>
</dbReference>
<dbReference type="InterPro" id="IPR004161">
    <property type="entry name" value="EFTu-like_2"/>
</dbReference>
<dbReference type="InterPro" id="IPR033720">
    <property type="entry name" value="EFTU_2"/>
</dbReference>
<dbReference type="InterPro" id="IPR031157">
    <property type="entry name" value="G_TR_CS"/>
</dbReference>
<dbReference type="InterPro" id="IPR027417">
    <property type="entry name" value="P-loop_NTPase"/>
</dbReference>
<dbReference type="InterPro" id="IPR005225">
    <property type="entry name" value="Small_GTP-bd"/>
</dbReference>
<dbReference type="InterPro" id="IPR000795">
    <property type="entry name" value="T_Tr_GTP-bd_dom"/>
</dbReference>
<dbReference type="InterPro" id="IPR009000">
    <property type="entry name" value="Transl_B-barrel_sf"/>
</dbReference>
<dbReference type="InterPro" id="IPR009001">
    <property type="entry name" value="Transl_elong_EF1A/Init_IF2_C"/>
</dbReference>
<dbReference type="InterPro" id="IPR004541">
    <property type="entry name" value="Transl_elong_EFTu/EF1A_bac/org"/>
</dbReference>
<dbReference type="InterPro" id="IPR004160">
    <property type="entry name" value="Transl_elong_EFTu/EF1A_C"/>
</dbReference>
<dbReference type="NCBIfam" id="TIGR00485">
    <property type="entry name" value="EF-Tu"/>
    <property type="match status" value="1"/>
</dbReference>
<dbReference type="NCBIfam" id="NF000766">
    <property type="entry name" value="PRK00049.1"/>
    <property type="match status" value="1"/>
</dbReference>
<dbReference type="NCBIfam" id="NF009372">
    <property type="entry name" value="PRK12735.1"/>
    <property type="match status" value="1"/>
</dbReference>
<dbReference type="NCBIfam" id="NF009373">
    <property type="entry name" value="PRK12736.1"/>
    <property type="match status" value="1"/>
</dbReference>
<dbReference type="NCBIfam" id="TIGR00231">
    <property type="entry name" value="small_GTP"/>
    <property type="match status" value="1"/>
</dbReference>
<dbReference type="PANTHER" id="PTHR43721:SF22">
    <property type="entry name" value="ELONGATION FACTOR TU, MITOCHONDRIAL"/>
    <property type="match status" value="1"/>
</dbReference>
<dbReference type="PANTHER" id="PTHR43721">
    <property type="entry name" value="ELONGATION FACTOR TU-RELATED"/>
    <property type="match status" value="1"/>
</dbReference>
<dbReference type="Pfam" id="PF00009">
    <property type="entry name" value="GTP_EFTU"/>
    <property type="match status" value="1"/>
</dbReference>
<dbReference type="Pfam" id="PF03144">
    <property type="entry name" value="GTP_EFTU_D2"/>
    <property type="match status" value="1"/>
</dbReference>
<dbReference type="Pfam" id="PF03143">
    <property type="entry name" value="GTP_EFTU_D3"/>
    <property type="match status" value="1"/>
</dbReference>
<dbReference type="PRINTS" id="PR00315">
    <property type="entry name" value="ELONGATNFCT"/>
</dbReference>
<dbReference type="SUPFAM" id="SSF50465">
    <property type="entry name" value="EF-Tu/eEF-1alpha/eIF2-gamma C-terminal domain"/>
    <property type="match status" value="1"/>
</dbReference>
<dbReference type="SUPFAM" id="SSF52540">
    <property type="entry name" value="P-loop containing nucleoside triphosphate hydrolases"/>
    <property type="match status" value="1"/>
</dbReference>
<dbReference type="SUPFAM" id="SSF50447">
    <property type="entry name" value="Translation proteins"/>
    <property type="match status" value="1"/>
</dbReference>
<dbReference type="PROSITE" id="PS00301">
    <property type="entry name" value="G_TR_1"/>
    <property type="match status" value="1"/>
</dbReference>
<dbReference type="PROSITE" id="PS51722">
    <property type="entry name" value="G_TR_2"/>
    <property type="match status" value="1"/>
</dbReference>
<gene>
    <name evidence="2" type="primary">tuf</name>
    <name type="ordered locus">MYCGA2260</name>
    <name type="ORF">MGA_1033</name>
</gene>
<comment type="function">
    <text evidence="2">GTP hydrolase that promotes the GTP-dependent binding of aminoacyl-tRNA to the A-site of ribosomes during protein biosynthesis.</text>
</comment>
<comment type="catalytic activity">
    <reaction evidence="2">
        <text>GTP + H2O = GDP + phosphate + H(+)</text>
        <dbReference type="Rhea" id="RHEA:19669"/>
        <dbReference type="ChEBI" id="CHEBI:15377"/>
        <dbReference type="ChEBI" id="CHEBI:15378"/>
        <dbReference type="ChEBI" id="CHEBI:37565"/>
        <dbReference type="ChEBI" id="CHEBI:43474"/>
        <dbReference type="ChEBI" id="CHEBI:58189"/>
        <dbReference type="EC" id="3.6.5.3"/>
    </reaction>
    <physiologicalReaction direction="left-to-right" evidence="2">
        <dbReference type="Rhea" id="RHEA:19670"/>
    </physiologicalReaction>
</comment>
<comment type="subunit">
    <text evidence="2">Monomer.</text>
</comment>
<comment type="subcellular location">
    <subcellularLocation>
        <location evidence="2">Cytoplasm</location>
    </subcellularLocation>
</comment>
<comment type="similarity">
    <text evidence="2">Belongs to the TRAFAC class translation factor GTPase superfamily. Classic translation factor GTPase family. EF-Tu/EF-1A subfamily.</text>
</comment>
<organism>
    <name type="scientific">Mycoplasmoides gallisepticum (strain R(low / passage 15 / clone 2))</name>
    <name type="common">Mycoplasma gallisepticum</name>
    <dbReference type="NCBI Taxonomy" id="710127"/>
    <lineage>
        <taxon>Bacteria</taxon>
        <taxon>Bacillati</taxon>
        <taxon>Mycoplasmatota</taxon>
        <taxon>Mycoplasmoidales</taxon>
        <taxon>Mycoplasmoidaceae</taxon>
        <taxon>Mycoplasmoides</taxon>
    </lineage>
</organism>
<feature type="chain" id="PRO_0000091345" description="Elongation factor Tu">
    <location>
        <begin position="1"/>
        <end position="394"/>
    </location>
</feature>
<feature type="domain" description="tr-type G">
    <location>
        <begin position="10"/>
        <end position="204"/>
    </location>
</feature>
<feature type="region of interest" description="G1" evidence="1">
    <location>
        <begin position="19"/>
        <end position="26"/>
    </location>
</feature>
<feature type="region of interest" description="G2" evidence="1">
    <location>
        <begin position="60"/>
        <end position="64"/>
    </location>
</feature>
<feature type="region of interest" description="G3" evidence="1">
    <location>
        <begin position="81"/>
        <end position="84"/>
    </location>
</feature>
<feature type="region of interest" description="G4" evidence="1">
    <location>
        <begin position="136"/>
        <end position="139"/>
    </location>
</feature>
<feature type="region of interest" description="G5" evidence="1">
    <location>
        <begin position="174"/>
        <end position="176"/>
    </location>
</feature>
<feature type="binding site" evidence="2">
    <location>
        <begin position="19"/>
        <end position="26"/>
    </location>
    <ligand>
        <name>GTP</name>
        <dbReference type="ChEBI" id="CHEBI:37565"/>
    </ligand>
</feature>
<feature type="binding site" evidence="2">
    <location>
        <position position="26"/>
    </location>
    <ligand>
        <name>Mg(2+)</name>
        <dbReference type="ChEBI" id="CHEBI:18420"/>
    </ligand>
</feature>
<feature type="binding site" evidence="2">
    <location>
        <begin position="81"/>
        <end position="85"/>
    </location>
    <ligand>
        <name>GTP</name>
        <dbReference type="ChEBI" id="CHEBI:37565"/>
    </ligand>
</feature>
<feature type="binding site" evidence="2">
    <location>
        <begin position="136"/>
        <end position="139"/>
    </location>
    <ligand>
        <name>GTP</name>
        <dbReference type="ChEBI" id="CHEBI:37565"/>
    </ligand>
</feature>
<proteinExistence type="inferred from homology"/>
<protein>
    <recommendedName>
        <fullName evidence="2">Elongation factor Tu</fullName>
        <shortName evidence="2">EF-Tu</shortName>
        <ecNumber evidence="2">3.6.5.3</ecNumber>
    </recommendedName>
</protein>
<sequence length="394" mass="43099">MAKERFDRSKPHVNIGTIGHIDHGKTTLTAAICTVLSKAGTSEAKKYDEIDAAPEEKARGITINTAHVEYATQNRHYAHVDCPGHADYVKNMITGAAQMDGGILVVSATDGPMPQTREHILLARQVGVPKMVVFLNKCDVADDPEMQELVEMEVRDLLKSYGFDGDNTPVIRGSALGALNGEPAWEEKIHELMKAVDEYIPTPDREVDKPFLLPIEDTMTITGRGTVVTGRVERGQLKVGEEVEIVGITDTRKVVVTGIEMFRKELDAAMAGDNAGILLRGVDRKDVQRGQVLAKPGSITPHKKFRAEIYALKKDEGGRHTAFLNGYRPQFYFRTTDVTGSIQLKEGTEMVMPGDNTEIIVELISSIACEKGSKFSIREGGRTVGAGTVVEVLE</sequence>
<keyword id="KW-0963">Cytoplasm</keyword>
<keyword id="KW-0251">Elongation factor</keyword>
<keyword id="KW-0342">GTP-binding</keyword>
<keyword id="KW-0378">Hydrolase</keyword>
<keyword id="KW-0460">Magnesium</keyword>
<keyword id="KW-0479">Metal-binding</keyword>
<keyword id="KW-0547">Nucleotide-binding</keyword>
<keyword id="KW-0648">Protein biosynthesis</keyword>
<keyword id="KW-1185">Reference proteome</keyword>
<evidence type="ECO:0000250" key="1"/>
<evidence type="ECO:0000255" key="2">
    <source>
        <dbReference type="HAMAP-Rule" id="MF_00118"/>
    </source>
</evidence>
<accession>P18906</accession>
<name>EFTU_MYCGA</name>